<name>MXMT1_COFCA</name>
<protein>
    <recommendedName>
        <fullName evidence="9">7-methylxanthine methyltransferase 1</fullName>
        <shortName evidence="9">CcMXMT1</shortName>
        <ecNumber evidence="3">2.1.1.159</ecNumber>
    </recommendedName>
    <alternativeName>
        <fullName evidence="10">7-methylxanthine N-methyltransferase 1</fullName>
    </alternativeName>
    <alternativeName>
        <fullName evidence="8">N-methyltransferase</fullName>
    </alternativeName>
    <alternativeName>
        <fullName evidence="10">Theobromine synthase MXMT1</fullName>
    </alternativeName>
</protein>
<reference key="1">
    <citation type="submission" date="2002-03" db="EMBL/GenBank/DDBJ databases">
        <title>N-methyltransferases in the genus Coffea.</title>
        <authorList>
            <person name="Kretschmar J.A."/>
            <person name="Baumann T.W."/>
        </authorList>
    </citation>
    <scope>NUCLEOTIDE SEQUENCE [MRNA]</scope>
    <source>
        <tissue>Leaf</tissue>
    </source>
</reference>
<reference key="2">
    <citation type="submission" date="2003-04" db="EMBL/GenBank/DDBJ databases">
        <title>Genetic diversity of N-methyltransferase genes involved in caffeine biosynthesis in coffee trees.</title>
        <authorList>
            <person name="de Kochko A."/>
            <person name="Moreau C."/>
            <person name="Noirot M."/>
            <person name="Chrestin H."/>
            <person name="Lesage A."/>
            <person name="Campa C."/>
        </authorList>
    </citation>
    <scope>NUCLEOTIDE SEQUENCE [GENOMIC DNA]</scope>
</reference>
<reference key="3">
    <citation type="journal article" date="2005" name="J. Biotechnol.">
        <title>Isolation of promoter for N-methyltransferase gene associated with caffeine biosynthesis in Coffea canephora.</title>
        <authorList>
            <person name="Satyanarayana K.V."/>
            <person name="Kumar V."/>
            <person name="Chandrashekar A."/>
            <person name="Ravishankar G.A."/>
        </authorList>
    </citation>
    <scope>NUCLEOTIDE SEQUENCE [GENOMIC DNA]</scope>
    <source>
        <strain>cv. S-274</strain>
    </source>
</reference>
<reference key="4">
    <citation type="submission" date="2006-01" db="EMBL/GenBank/DDBJ databases">
        <title>Intra and inter species conservation of non-coding regions of N-methyltransferase genes associated with caffeine biosynthesis in coffee.</title>
        <authorList>
            <person name="Satyanarayana K.V."/>
            <person name="Chandrashekar A."/>
            <person name="Ravishankar G.A."/>
        </authorList>
    </citation>
    <scope>NUCLEOTIDE SEQUENCE [GENOMIC DNA]</scope>
    <source>
        <strain>cv. S-274</strain>
    </source>
</reference>
<reference key="5">
    <citation type="journal article" date="2013" name="Gene">
        <title>Involvement of a novel intronic microRNA in cross regulation of N-methyltransferase genes involved in caffeine biosynthesis in Coffea canephora.</title>
        <authorList>
            <person name="Mohanan S."/>
            <person name="Gowda K."/>
            <person name="Kandukuri S.V."/>
            <person name="Chandrashekar A."/>
        </authorList>
    </citation>
    <scope>NUCLEOTIDE SEQUENCE [MRNA]</scope>
</reference>
<reference key="6">
    <citation type="journal article" date="2015" name="Planta">
        <title>Differential regulation of caffeine metabolism in Coffea arabica (Arabica) and Coffea canephora (Robusta).</title>
        <authorList>
            <person name="Perrois C."/>
            <person name="Strickler S.R."/>
            <person name="Mathieu G."/>
            <person name="Lepelley M."/>
            <person name="Bedon L."/>
            <person name="Michaux S."/>
            <person name="Husson J."/>
            <person name="Mueller L."/>
            <person name="Privat I."/>
        </authorList>
    </citation>
    <scope>NUCLEOTIDE SEQUENCE [GENOMIC DNA / MRNA]</scope>
    <scope>DEVELOPMENTAL STAGE</scope>
    <scope>TISSUE SPECIFICITY</scope>
    <scope>GENE FAMILY</scope>
    <scope>NOMENCLATURE</scope>
    <source>
        <strain>cv. DH200-94</strain>
    </source>
</reference>
<reference key="7">
    <citation type="journal article" date="2014" name="Science">
        <title>The coffee genome provides insight into the convergent evolution of caffeine biosynthesis.</title>
        <authorList>
            <person name="Denoeud F."/>
            <person name="Carretero-Paulet L."/>
            <person name="Dereeper A."/>
            <person name="Droc G."/>
            <person name="Guyot R."/>
            <person name="Pietrella M."/>
            <person name="Zheng C."/>
            <person name="Alberti A."/>
            <person name="Anthony F."/>
            <person name="Aprea G."/>
            <person name="Aury J.M."/>
            <person name="Bento P."/>
            <person name="Bernard M."/>
            <person name="Bocs S."/>
            <person name="Campa C."/>
            <person name="Cenci A."/>
            <person name="Combes M.C."/>
            <person name="Crouzillat D."/>
            <person name="Da Silva C."/>
            <person name="Daddiego L."/>
            <person name="De Bellis F."/>
            <person name="Dussert S."/>
            <person name="Garsmeur O."/>
            <person name="Gayraud T."/>
            <person name="Guignon V."/>
            <person name="Jahn K."/>
            <person name="Jamilloux V."/>
            <person name="Joet T."/>
            <person name="Labadie K."/>
            <person name="Lan T."/>
            <person name="Leclercq J."/>
            <person name="Lepelley M."/>
            <person name="Leroy T."/>
            <person name="Li L.T."/>
            <person name="Librado P."/>
            <person name="Lopez L."/>
            <person name="Munoz A."/>
            <person name="Noel B."/>
            <person name="Pallavicini A."/>
            <person name="Perrotta G."/>
            <person name="Poncet V."/>
            <person name="Pot D."/>
            <person name="Priyono X."/>
            <person name="Rigoreau M."/>
            <person name="Rouard M."/>
            <person name="Rozas J."/>
            <person name="Tranchant-Dubreuil C."/>
            <person name="VanBuren R."/>
            <person name="Zhang Q."/>
            <person name="Andrade A.C."/>
            <person name="Argout X."/>
            <person name="Bertrand B."/>
            <person name="de Kochko A."/>
            <person name="Graziosi G."/>
            <person name="Henry R.J."/>
            <person name="Jayarama X."/>
            <person name="Ming R."/>
            <person name="Nagai C."/>
            <person name="Rounsley S."/>
            <person name="Sankoff D."/>
            <person name="Giuliano G."/>
            <person name="Albert V.A."/>
            <person name="Wincker P."/>
            <person name="Lashermes P."/>
        </authorList>
    </citation>
    <scope>NUCLEOTIDE SEQUENCE [LARGE SCALE GENOMIC DNA]</scope>
    <scope>TISSUE SPECIFICITY</scope>
    <scope>DEVELOPMENTAL STAGE</scope>
    <source>
        <strain>cv. DH200-94</strain>
    </source>
</reference>
<reference key="8">
    <citation type="journal article" date="2008" name="Phytochemistry">
        <title>Caffeine and related purine alkaloids: biosynthesis, catabolism, function and genetic engineering.</title>
        <authorList>
            <person name="Ashihara H."/>
            <person name="Sano H."/>
            <person name="Crozier A."/>
        </authorList>
    </citation>
    <scope>REVIEW ON CAFFEINE BIOSYNTHESIS</scope>
</reference>
<organism>
    <name type="scientific">Coffea canephora</name>
    <name type="common">Robusta coffee</name>
    <dbReference type="NCBI Taxonomy" id="49390"/>
    <lineage>
        <taxon>Eukaryota</taxon>
        <taxon>Viridiplantae</taxon>
        <taxon>Streptophyta</taxon>
        <taxon>Embryophyta</taxon>
        <taxon>Tracheophyta</taxon>
        <taxon>Spermatophyta</taxon>
        <taxon>Magnoliopsida</taxon>
        <taxon>eudicotyledons</taxon>
        <taxon>Gunneridae</taxon>
        <taxon>Pentapetalae</taxon>
        <taxon>asterids</taxon>
        <taxon>lamiids</taxon>
        <taxon>Gentianales</taxon>
        <taxon>Rubiaceae</taxon>
        <taxon>Ixoroideae</taxon>
        <taxon>Gardenieae complex</taxon>
        <taxon>Bertiereae - Coffeeae clade</taxon>
        <taxon>Coffeeae</taxon>
        <taxon>Coffea</taxon>
    </lineage>
</organism>
<gene>
    <name evidence="9" type="primary">MXMT1</name>
    <name evidence="8" type="synonym">NMT</name>
    <name evidence="11" type="ORF">GSCOC_T00004719001</name>
</gene>
<keyword id="KW-0017">Alkaloid metabolism</keyword>
<keyword id="KW-0963">Cytoplasm</keyword>
<keyword id="KW-0460">Magnesium</keyword>
<keyword id="KW-0479">Metal-binding</keyword>
<keyword id="KW-0489">Methyltransferase</keyword>
<keyword id="KW-1185">Reference proteome</keyword>
<keyword id="KW-0808">Transferase</keyword>
<dbReference type="EC" id="2.1.1.159" evidence="3"/>
<dbReference type="EMBL" id="AF494414">
    <property type="protein sequence ID" value="AAM18504.1"/>
    <property type="molecule type" value="mRNA"/>
</dbReference>
<dbReference type="EMBL" id="AY273814">
    <property type="protein sequence ID" value="AAQ16155.1"/>
    <property type="molecule type" value="Genomic_DNA"/>
</dbReference>
<dbReference type="EMBL" id="AY918124">
    <property type="protein sequence ID" value="AAX07284.1"/>
    <property type="molecule type" value="Genomic_DNA"/>
</dbReference>
<dbReference type="EMBL" id="AY918126">
    <property type="protein sequence ID" value="AAX07285.1"/>
    <property type="molecule type" value="Genomic_DNA"/>
</dbReference>
<dbReference type="EMBL" id="DQ010011">
    <property type="protein sequence ID" value="AAY56107.1"/>
    <property type="molecule type" value="Genomic_DNA"/>
</dbReference>
<dbReference type="EMBL" id="DQ348077">
    <property type="protein sequence ID" value="ABC74575.1"/>
    <property type="molecule type" value="Genomic_DNA"/>
</dbReference>
<dbReference type="EMBL" id="HQ616707">
    <property type="protein sequence ID" value="ADR30039.1"/>
    <property type="molecule type" value="mRNA"/>
</dbReference>
<dbReference type="EMBL" id="JX978507">
    <property type="protein sequence ID" value="AFV60435.1"/>
    <property type="molecule type" value="Genomic_DNA"/>
</dbReference>
<dbReference type="EMBL" id="JX978517">
    <property type="protein sequence ID" value="AFV60445.1"/>
    <property type="molecule type" value="mRNA"/>
</dbReference>
<dbReference type="EMBL" id="HG741650">
    <property type="protein sequence ID" value="CDP21124.1"/>
    <property type="molecule type" value="Genomic_DNA"/>
</dbReference>
<dbReference type="SMR" id="Q4U5S1"/>
<dbReference type="EnsemblPlants" id="CDP21124">
    <property type="protein sequence ID" value="CDP21124"/>
    <property type="gene ID" value="GSCOC_T00004719001"/>
</dbReference>
<dbReference type="Gramene" id="CDP21124">
    <property type="protein sequence ID" value="CDP21124"/>
    <property type="gene ID" value="GSCOC_T00004719001"/>
</dbReference>
<dbReference type="InParanoid" id="Q4U5S1"/>
<dbReference type="OMA" id="NICITRM"/>
<dbReference type="PhylomeDB" id="Q4U5S1"/>
<dbReference type="Proteomes" id="UP000295252">
    <property type="component" value="Unassembled WGS sequence"/>
</dbReference>
<dbReference type="GO" id="GO:0005737">
    <property type="term" value="C:cytoplasm"/>
    <property type="evidence" value="ECO:0007669"/>
    <property type="project" value="UniProtKB-SubCell"/>
</dbReference>
<dbReference type="GO" id="GO:0046872">
    <property type="term" value="F:metal ion binding"/>
    <property type="evidence" value="ECO:0007669"/>
    <property type="project" value="UniProtKB-KW"/>
</dbReference>
<dbReference type="GO" id="GO:0008168">
    <property type="term" value="F:methyltransferase activity"/>
    <property type="evidence" value="ECO:0007669"/>
    <property type="project" value="UniProtKB-KW"/>
</dbReference>
<dbReference type="GO" id="GO:0009820">
    <property type="term" value="P:alkaloid metabolic process"/>
    <property type="evidence" value="ECO:0007669"/>
    <property type="project" value="UniProtKB-KW"/>
</dbReference>
<dbReference type="GO" id="GO:0032259">
    <property type="term" value="P:methylation"/>
    <property type="evidence" value="ECO:0007669"/>
    <property type="project" value="UniProtKB-KW"/>
</dbReference>
<dbReference type="Gene3D" id="1.10.1200.270">
    <property type="entry name" value="Methyltransferase, alpha-helical capping domain"/>
    <property type="match status" value="1"/>
</dbReference>
<dbReference type="Gene3D" id="3.40.50.150">
    <property type="entry name" value="Vaccinia Virus protein VP39"/>
    <property type="match status" value="1"/>
</dbReference>
<dbReference type="InterPro" id="IPR005299">
    <property type="entry name" value="MeTrfase_7"/>
</dbReference>
<dbReference type="InterPro" id="IPR042086">
    <property type="entry name" value="MeTrfase_capping"/>
</dbReference>
<dbReference type="InterPro" id="IPR029063">
    <property type="entry name" value="SAM-dependent_MTases_sf"/>
</dbReference>
<dbReference type="PANTHER" id="PTHR31009">
    <property type="entry name" value="S-ADENOSYL-L-METHIONINE:CARBOXYL METHYLTRANSFERASE FAMILY PROTEIN"/>
    <property type="match status" value="1"/>
</dbReference>
<dbReference type="Pfam" id="PF03492">
    <property type="entry name" value="Methyltransf_7"/>
    <property type="match status" value="1"/>
</dbReference>
<dbReference type="SUPFAM" id="SSF53335">
    <property type="entry name" value="S-adenosyl-L-methionine-dependent methyltransferases"/>
    <property type="match status" value="1"/>
</dbReference>
<feature type="chain" id="PRO_0000451780" description="7-methylxanthine methyltransferase 1">
    <location>
        <begin position="1"/>
        <end position="378"/>
    </location>
</feature>
<feature type="binding site" evidence="2">
    <location>
        <position position="18"/>
    </location>
    <ligand>
        <name>S-adenosyl-L-homocysteine</name>
        <dbReference type="ChEBI" id="CHEBI:57856"/>
    </ligand>
</feature>
<feature type="binding site" evidence="2">
    <location>
        <position position="61"/>
    </location>
    <ligand>
        <name>S-adenosyl-L-homocysteine</name>
        <dbReference type="ChEBI" id="CHEBI:57856"/>
    </ligand>
</feature>
<feature type="binding site" evidence="2">
    <location>
        <position position="66"/>
    </location>
    <ligand>
        <name>S-adenosyl-L-homocysteine</name>
        <dbReference type="ChEBI" id="CHEBI:57856"/>
    </ligand>
</feature>
<feature type="binding site" evidence="2">
    <location>
        <position position="100"/>
    </location>
    <ligand>
        <name>S-adenosyl-L-homocysteine</name>
        <dbReference type="ChEBI" id="CHEBI:57856"/>
    </ligand>
</feature>
<feature type="binding site" evidence="2">
    <location>
        <position position="101"/>
    </location>
    <ligand>
        <name>S-adenosyl-L-homocysteine</name>
        <dbReference type="ChEBI" id="CHEBI:57856"/>
    </ligand>
</feature>
<feature type="binding site" evidence="2">
    <location>
        <position position="139"/>
    </location>
    <ligand>
        <name>S-adenosyl-L-homocysteine</name>
        <dbReference type="ChEBI" id="CHEBI:57856"/>
    </ligand>
</feature>
<feature type="binding site" evidence="2">
    <location>
        <position position="140"/>
    </location>
    <ligand>
        <name>S-adenosyl-L-homocysteine</name>
        <dbReference type="ChEBI" id="CHEBI:57856"/>
    </ligand>
</feature>
<feature type="binding site" evidence="1">
    <location>
        <position position="156"/>
    </location>
    <ligand>
        <name>S-adenosyl-L-homocysteine</name>
        <dbReference type="ChEBI" id="CHEBI:57856"/>
    </ligand>
</feature>
<feature type="binding site" evidence="2">
    <location>
        <position position="157"/>
    </location>
    <ligand>
        <name>theobromine</name>
        <dbReference type="ChEBI" id="CHEBI:28946"/>
    </ligand>
</feature>
<feature type="binding site" evidence="2">
    <location>
        <position position="160"/>
    </location>
    <ligand>
        <name>theobromine</name>
        <dbReference type="ChEBI" id="CHEBI:28946"/>
    </ligand>
</feature>
<feature type="binding site" evidence="2">
    <location>
        <position position="161"/>
    </location>
    <ligand>
        <name>theobromine</name>
        <dbReference type="ChEBI" id="CHEBI:28946"/>
    </ligand>
</feature>
<feature type="binding site" evidence="4">
    <location>
        <position position="178"/>
    </location>
    <ligand>
        <name>Mg(2+)</name>
        <dbReference type="ChEBI" id="CHEBI:18420"/>
    </ligand>
</feature>
<feature type="binding site" evidence="4">
    <location>
        <position position="260"/>
    </location>
    <ligand>
        <name>Mg(2+)</name>
        <dbReference type="ChEBI" id="CHEBI:18420"/>
    </ligand>
</feature>
<feature type="binding site" evidence="4">
    <location>
        <position position="262"/>
    </location>
    <ligand>
        <name>Mg(2+)</name>
        <dbReference type="ChEBI" id="CHEBI:18420"/>
    </ligand>
</feature>
<feature type="binding site" evidence="4">
    <location>
        <position position="263"/>
    </location>
    <ligand>
        <name>Mg(2+)</name>
        <dbReference type="ChEBI" id="CHEBI:18420"/>
    </ligand>
</feature>
<feature type="binding site" evidence="2">
    <location>
        <position position="362"/>
    </location>
    <ligand>
        <name>theobromine</name>
        <dbReference type="ChEBI" id="CHEBI:28946"/>
    </ligand>
</feature>
<feature type="site" description="Involved in substrate discrimination" evidence="5">
    <location>
        <position position="154"/>
    </location>
</feature>
<feature type="site" description="Involved in substrate discrimination" evidence="5">
    <location>
        <position position="266"/>
    </location>
</feature>
<feature type="site" description="Involved in substrate discrimination" evidence="5">
    <location>
        <position position="337"/>
    </location>
</feature>
<feature type="sequence conflict" description="In Ref. 4; ABC74575." evidence="10" ref="4">
    <original>Q</original>
    <variation>R</variation>
    <location>
        <position position="4"/>
    </location>
</feature>
<feature type="sequence conflict" description="In Ref. 4; ABC74575." evidence="10" ref="4">
    <original>L</original>
    <variation>P</variation>
    <location>
        <position position="144"/>
    </location>
</feature>
<feature type="sequence conflict" description="In Ref. 3; AAX07285." evidence="10" ref="3">
    <original>LLE</original>
    <variation>RLG</variation>
    <location>
        <begin position="253"/>
        <end position="255"/>
    </location>
</feature>
<feature type="sequence conflict" description="In Ref. 3; AAX07285." evidence="10" ref="3">
    <original>IPFFTPSA</original>
    <variation>VPIYTASV</variation>
    <location>
        <begin position="264"/>
        <end position="271"/>
    </location>
</feature>
<feature type="sequence conflict" description="In Ref. 3; AAX07284." evidence="10" ref="3">
    <original>F</original>
    <variation>S</variation>
    <location>
        <position position="267"/>
    </location>
</feature>
<feature type="sequence conflict" description="In Ref. 3; AAX07285." evidence="10" ref="3">
    <original>I</original>
    <variation>M</variation>
    <location>
        <position position="277"/>
    </location>
</feature>
<feature type="sequence conflict" description="In Ref. 4; ABC74575." evidence="10" ref="4">
    <original>Y</original>
    <variation>N</variation>
    <location>
        <position position="288"/>
    </location>
</feature>
<feature type="sequence conflict" description="In Ref. 3; AAX07284." evidence="10" ref="3">
    <original>I</original>
    <variation>V</variation>
    <location>
        <position position="302"/>
    </location>
</feature>
<feature type="sequence conflict" description="In Ref. 1; AAM18504, 2; AAQ16155, 5; ADR30039, 3; AAX07284 and 4; ABC74575." evidence="10" ref="1 2 5 3 4">
    <original>T</original>
    <variation>R</variation>
    <location>
        <position position="309"/>
    </location>
</feature>
<sequence>MELQEVLHMNEGEGDTSYAKNASYNLALAKVKPFLEQCIRELLRANLPNINKCIKVADLGCASGPNTLLTVRDIVQSIDKVGQEEKNELERPTIQIFLNDLFQNDFNSVFKLLPSFYRKLEKENGRKIGSCLISAMPGSFYGRLFPEESMHFLHSCYSVHWLSQVPSGLVIELGIGANKGSIYSSKGCRPPVQKAYLDQFTKDFTTFLRIHSKELFSRGRMLLTCICKVDEFDEPNPLDLLDMAINDLIVEGLLEEEKLDSFNIPFFTPSAEEVKCIVEEEGSCEILYLETFKAHYDAAFSIDDDYPVTSHEQIKAEYVASLIRSVYEPILASHFGEAIMPDLFHRLAKHAAKVLHMGKGCYNNLIISLAKKPEKSDV</sequence>
<proteinExistence type="evidence at transcript level"/>
<accession>Q4U5S1</accession>
<accession>Q2L8A5</accession>
<accession>Q5EBW9</accession>
<accession>Q5EBX0</accession>
<accession>Q7FRH9</accession>
<evidence type="ECO:0000250" key="1">
    <source>
        <dbReference type="UniProtKB" id="A4GE69"/>
    </source>
</evidence>
<evidence type="ECO:0000250" key="2">
    <source>
        <dbReference type="UniProtKB" id="A4GE70"/>
    </source>
</evidence>
<evidence type="ECO:0000250" key="3">
    <source>
        <dbReference type="UniProtKB" id="Q9AVJ9"/>
    </source>
</evidence>
<evidence type="ECO:0000250" key="4">
    <source>
        <dbReference type="UniProtKB" id="Q9FLN8"/>
    </source>
</evidence>
<evidence type="ECO:0000250" key="5">
    <source>
        <dbReference type="UniProtKB" id="Q9FZN8"/>
    </source>
</evidence>
<evidence type="ECO:0000269" key="6">
    <source>
    </source>
</evidence>
<evidence type="ECO:0000269" key="7">
    <source>
    </source>
</evidence>
<evidence type="ECO:0000303" key="8">
    <source>
    </source>
</evidence>
<evidence type="ECO:0000303" key="9">
    <source>
    </source>
</evidence>
<evidence type="ECO:0000305" key="10"/>
<evidence type="ECO:0000312" key="11">
    <source>
        <dbReference type="EMBL" id="CDP21124.1"/>
    </source>
</evidence>
<comment type="function">
    <text evidence="3">Involved in the biosynthesis of caffeine (By similarity). Catalyzes the conversion of 7-methylxanthine (7mX) to theobromine and of paraxanthine to caffeine (By similarity).</text>
</comment>
<comment type="catalytic activity">
    <reaction evidence="3">
        <text>7-methylxanthine + S-adenosyl-L-methionine = theobromine + S-adenosyl-L-homocysteine + H(+)</text>
        <dbReference type="Rhea" id="RHEA:24604"/>
        <dbReference type="ChEBI" id="CHEBI:15378"/>
        <dbReference type="ChEBI" id="CHEBI:28946"/>
        <dbReference type="ChEBI" id="CHEBI:48991"/>
        <dbReference type="ChEBI" id="CHEBI:57856"/>
        <dbReference type="ChEBI" id="CHEBI:59789"/>
        <dbReference type="EC" id="2.1.1.159"/>
    </reaction>
    <physiologicalReaction direction="left-to-right" evidence="3">
        <dbReference type="Rhea" id="RHEA:24605"/>
    </physiologicalReaction>
</comment>
<comment type="cofactor">
    <cofactor evidence="4">
        <name>Mg(2+)</name>
        <dbReference type="ChEBI" id="CHEBI:18420"/>
    </cofactor>
    <text evidence="4">Binds 1 Mg(2+) ion per subunit.</text>
</comment>
<comment type="pathway">
    <text evidence="3">Alkaloid biosynthesis.</text>
</comment>
<comment type="subcellular location">
    <subcellularLocation>
        <location evidence="4">Cytoplasm</location>
    </subcellularLocation>
</comment>
<comment type="tissue specificity">
    <text evidence="6 7">Mainly expressed, at low levels, in leaves and fruits (grains) (PubMed:25190796, PubMed:25249475). Also present, at lower levels, in roots, stamens and pistils (PubMed:25190796).</text>
</comment>
<comment type="developmental stage">
    <text evidence="6 7">In leaves, mostly expressed in young tissues (PubMed:25249475). In fruits, mostly expressed in green grains but fades out as they are yellowing to disappear in red mature grains (PubMed:25190796, PubMed:25249475).</text>
</comment>
<comment type="similarity">
    <text evidence="10">Belongs to the methyltransferase superfamily. Type-7 methyltransferase family.</text>
</comment>